<sequence>MNTADFDFHLPEELIAQTPLEKRDASKLLIVNRETGEMQDKHFHSIIDMLEPGDALVMNDTRVLPARLYGQKVETGSHVELLLLKNTSGDEWEVLAKPAKRLKVGTRISFGDGRLSAVVTEELTHGGRIVRFEYQRIFLEVLESLGEMPLPPYIHEKLDDRERYQTVYAKESGSAAAPTAGLHFTKELLAEIQAKGVHLVYLTLHVGLGTFRPVSVDNLDEHEMHSEFYQLSEEAAATLRSVKENGGRVIAVGTTSIRTLETIGSKFDGQIQADSGWTNIFIKPGYEWKVVDAFSTNFHLPKSTLVMLVSAFAGRELVLDAYHHSIQEHYRFFSFGDAMFIY</sequence>
<gene>
    <name evidence="1" type="primary">queA</name>
    <name type="ordered locus">spr1273</name>
</gene>
<dbReference type="EC" id="2.4.99.17" evidence="1"/>
<dbReference type="EMBL" id="AE007317">
    <property type="protein sequence ID" value="AAL00077.1"/>
    <property type="status" value="ALT_INIT"/>
    <property type="molecule type" value="Genomic_DNA"/>
</dbReference>
<dbReference type="PIR" id="H98030">
    <property type="entry name" value="H98030"/>
</dbReference>
<dbReference type="RefSeq" id="NP_358866.1">
    <property type="nucleotide sequence ID" value="NC_003098.1"/>
</dbReference>
<dbReference type="RefSeq" id="WP_001090161.1">
    <property type="nucleotide sequence ID" value="NC_003098.1"/>
</dbReference>
<dbReference type="SMR" id="Q8DPA0"/>
<dbReference type="STRING" id="171101.spr1273"/>
<dbReference type="KEGG" id="spr:spr1273"/>
<dbReference type="PATRIC" id="fig|171101.6.peg.1380"/>
<dbReference type="eggNOG" id="COG0809">
    <property type="taxonomic scope" value="Bacteria"/>
</dbReference>
<dbReference type="HOGENOM" id="CLU_039110_1_0_9"/>
<dbReference type="UniPathway" id="UPA00392"/>
<dbReference type="Proteomes" id="UP000000586">
    <property type="component" value="Chromosome"/>
</dbReference>
<dbReference type="GO" id="GO:0005737">
    <property type="term" value="C:cytoplasm"/>
    <property type="evidence" value="ECO:0007669"/>
    <property type="project" value="UniProtKB-SubCell"/>
</dbReference>
<dbReference type="GO" id="GO:0051075">
    <property type="term" value="F:S-adenosylmethionine:tRNA ribosyltransferase-isomerase activity"/>
    <property type="evidence" value="ECO:0000318"/>
    <property type="project" value="GO_Central"/>
</dbReference>
<dbReference type="GO" id="GO:0008616">
    <property type="term" value="P:queuosine biosynthetic process"/>
    <property type="evidence" value="ECO:0000318"/>
    <property type="project" value="GO_Central"/>
</dbReference>
<dbReference type="GO" id="GO:0002099">
    <property type="term" value="P:tRNA wobble guanine modification"/>
    <property type="evidence" value="ECO:0000318"/>
    <property type="project" value="GO_Central"/>
</dbReference>
<dbReference type="FunFam" id="2.40.10.240:FF:000002">
    <property type="entry name" value="S-adenosylmethionine:tRNA ribosyltransferase-isomerase"/>
    <property type="match status" value="1"/>
</dbReference>
<dbReference type="FunFam" id="3.40.1780.10:FF:000001">
    <property type="entry name" value="S-adenosylmethionine:tRNA ribosyltransferase-isomerase"/>
    <property type="match status" value="1"/>
</dbReference>
<dbReference type="Gene3D" id="2.40.10.240">
    <property type="entry name" value="QueA-like"/>
    <property type="match status" value="1"/>
</dbReference>
<dbReference type="Gene3D" id="3.40.1780.10">
    <property type="entry name" value="QueA-like"/>
    <property type="match status" value="1"/>
</dbReference>
<dbReference type="HAMAP" id="MF_00113">
    <property type="entry name" value="QueA"/>
    <property type="match status" value="1"/>
</dbReference>
<dbReference type="InterPro" id="IPR003699">
    <property type="entry name" value="QueA"/>
</dbReference>
<dbReference type="InterPro" id="IPR042118">
    <property type="entry name" value="QueA_dom1"/>
</dbReference>
<dbReference type="InterPro" id="IPR042119">
    <property type="entry name" value="QueA_dom2"/>
</dbReference>
<dbReference type="InterPro" id="IPR036100">
    <property type="entry name" value="QueA_sf"/>
</dbReference>
<dbReference type="NCBIfam" id="NF001140">
    <property type="entry name" value="PRK00147.1"/>
    <property type="match status" value="1"/>
</dbReference>
<dbReference type="NCBIfam" id="TIGR00113">
    <property type="entry name" value="queA"/>
    <property type="match status" value="1"/>
</dbReference>
<dbReference type="PANTHER" id="PTHR30307">
    <property type="entry name" value="S-ADENOSYLMETHIONINE:TRNA RIBOSYLTRANSFERASE-ISOMERASE"/>
    <property type="match status" value="1"/>
</dbReference>
<dbReference type="PANTHER" id="PTHR30307:SF0">
    <property type="entry name" value="S-ADENOSYLMETHIONINE:TRNA RIBOSYLTRANSFERASE-ISOMERASE"/>
    <property type="match status" value="1"/>
</dbReference>
<dbReference type="Pfam" id="PF02547">
    <property type="entry name" value="Queuosine_synth"/>
    <property type="match status" value="1"/>
</dbReference>
<dbReference type="SUPFAM" id="SSF111337">
    <property type="entry name" value="QueA-like"/>
    <property type="match status" value="1"/>
</dbReference>
<feature type="chain" id="PRO_0000165450" description="S-adenosylmethionine:tRNA ribosyltransferase-isomerase">
    <location>
        <begin position="1"/>
        <end position="342"/>
    </location>
</feature>
<organism>
    <name type="scientific">Streptococcus pneumoniae (strain ATCC BAA-255 / R6)</name>
    <dbReference type="NCBI Taxonomy" id="171101"/>
    <lineage>
        <taxon>Bacteria</taxon>
        <taxon>Bacillati</taxon>
        <taxon>Bacillota</taxon>
        <taxon>Bacilli</taxon>
        <taxon>Lactobacillales</taxon>
        <taxon>Streptococcaceae</taxon>
        <taxon>Streptococcus</taxon>
    </lineage>
</organism>
<evidence type="ECO:0000255" key="1">
    <source>
        <dbReference type="HAMAP-Rule" id="MF_00113"/>
    </source>
</evidence>
<evidence type="ECO:0000305" key="2"/>
<keyword id="KW-0963">Cytoplasm</keyword>
<keyword id="KW-0671">Queuosine biosynthesis</keyword>
<keyword id="KW-1185">Reference proteome</keyword>
<keyword id="KW-0949">S-adenosyl-L-methionine</keyword>
<keyword id="KW-0808">Transferase</keyword>
<protein>
    <recommendedName>
        <fullName evidence="1">S-adenosylmethionine:tRNA ribosyltransferase-isomerase</fullName>
        <ecNumber evidence="1">2.4.99.17</ecNumber>
    </recommendedName>
    <alternativeName>
        <fullName evidence="1">Queuosine biosynthesis protein QueA</fullName>
    </alternativeName>
</protein>
<comment type="function">
    <text evidence="1">Transfers and isomerizes the ribose moiety from AdoMet to the 7-aminomethyl group of 7-deazaguanine (preQ1-tRNA) to give epoxyqueuosine (oQ-tRNA).</text>
</comment>
<comment type="catalytic activity">
    <reaction evidence="1">
        <text>7-aminomethyl-7-carbaguanosine(34) in tRNA + S-adenosyl-L-methionine = epoxyqueuosine(34) in tRNA + adenine + L-methionine + 2 H(+)</text>
        <dbReference type="Rhea" id="RHEA:32155"/>
        <dbReference type="Rhea" id="RHEA-COMP:10342"/>
        <dbReference type="Rhea" id="RHEA-COMP:18582"/>
        <dbReference type="ChEBI" id="CHEBI:15378"/>
        <dbReference type="ChEBI" id="CHEBI:16708"/>
        <dbReference type="ChEBI" id="CHEBI:57844"/>
        <dbReference type="ChEBI" id="CHEBI:59789"/>
        <dbReference type="ChEBI" id="CHEBI:82833"/>
        <dbReference type="ChEBI" id="CHEBI:194443"/>
        <dbReference type="EC" id="2.4.99.17"/>
    </reaction>
</comment>
<comment type="pathway">
    <text evidence="1">tRNA modification; tRNA-queuosine biosynthesis.</text>
</comment>
<comment type="subunit">
    <text evidence="1">Monomer.</text>
</comment>
<comment type="subcellular location">
    <subcellularLocation>
        <location evidence="1">Cytoplasm</location>
    </subcellularLocation>
</comment>
<comment type="similarity">
    <text evidence="1">Belongs to the QueA family.</text>
</comment>
<comment type="sequence caution" evidence="2">
    <conflict type="erroneous initiation">
        <sequence resource="EMBL-CDS" id="AAL00077"/>
    </conflict>
</comment>
<name>QUEA_STRR6</name>
<reference key="1">
    <citation type="journal article" date="2001" name="J. Bacteriol.">
        <title>Genome of the bacterium Streptococcus pneumoniae strain R6.</title>
        <authorList>
            <person name="Hoskins J."/>
            <person name="Alborn W.E. Jr."/>
            <person name="Arnold J."/>
            <person name="Blaszczak L.C."/>
            <person name="Burgett S."/>
            <person name="DeHoff B.S."/>
            <person name="Estrem S.T."/>
            <person name="Fritz L."/>
            <person name="Fu D.-J."/>
            <person name="Fuller W."/>
            <person name="Geringer C."/>
            <person name="Gilmour R."/>
            <person name="Glass J.S."/>
            <person name="Khoja H."/>
            <person name="Kraft A.R."/>
            <person name="Lagace R.E."/>
            <person name="LeBlanc D.J."/>
            <person name="Lee L.N."/>
            <person name="Lefkowitz E.J."/>
            <person name="Lu J."/>
            <person name="Matsushima P."/>
            <person name="McAhren S.M."/>
            <person name="McHenney M."/>
            <person name="McLeaster K."/>
            <person name="Mundy C.W."/>
            <person name="Nicas T.I."/>
            <person name="Norris F.H."/>
            <person name="O'Gara M."/>
            <person name="Peery R.B."/>
            <person name="Robertson G.T."/>
            <person name="Rockey P."/>
            <person name="Sun P.-M."/>
            <person name="Winkler M.E."/>
            <person name="Yang Y."/>
            <person name="Young-Bellido M."/>
            <person name="Zhao G."/>
            <person name="Zook C.A."/>
            <person name="Baltz R.H."/>
            <person name="Jaskunas S.R."/>
            <person name="Rosteck P.R. Jr."/>
            <person name="Skatrud P.L."/>
            <person name="Glass J.I."/>
        </authorList>
    </citation>
    <scope>NUCLEOTIDE SEQUENCE [LARGE SCALE GENOMIC DNA]</scope>
    <source>
        <strain>ATCC BAA-255 / R6</strain>
    </source>
</reference>
<accession>Q8DPA0</accession>
<proteinExistence type="inferred from homology"/>